<name>KDTA_CHLMU</name>
<accession>Q9PKI5</accession>
<dbReference type="EC" id="2.4.99.12"/>
<dbReference type="EC" id="2.4.99.13"/>
<dbReference type="EC" id="2.4.99.14"/>
<dbReference type="EMBL" id="AE002160">
    <property type="protein sequence ID" value="AAF39326.1"/>
    <property type="molecule type" value="Genomic_DNA"/>
</dbReference>
<dbReference type="PIR" id="F81698">
    <property type="entry name" value="F81698"/>
</dbReference>
<dbReference type="SMR" id="Q9PKI5"/>
<dbReference type="CAZy" id="GT30">
    <property type="family name" value="Glycosyltransferase Family 30"/>
</dbReference>
<dbReference type="KEGG" id="cmu:TC_0480"/>
<dbReference type="eggNOG" id="COG1519">
    <property type="taxonomic scope" value="Bacteria"/>
</dbReference>
<dbReference type="HOGENOM" id="CLU_036146_2_1_0"/>
<dbReference type="UniPathway" id="UPA00958"/>
<dbReference type="Proteomes" id="UP000000800">
    <property type="component" value="Chromosome"/>
</dbReference>
<dbReference type="GO" id="GO:0005886">
    <property type="term" value="C:plasma membrane"/>
    <property type="evidence" value="ECO:0007669"/>
    <property type="project" value="UniProtKB-SubCell"/>
</dbReference>
<dbReference type="GO" id="GO:0043842">
    <property type="term" value="F:Kdo transferase activity"/>
    <property type="evidence" value="ECO:0007669"/>
    <property type="project" value="UniProtKB-EC"/>
</dbReference>
<dbReference type="GO" id="GO:0009245">
    <property type="term" value="P:lipid A biosynthetic process"/>
    <property type="evidence" value="ECO:0007669"/>
    <property type="project" value="TreeGrafter"/>
</dbReference>
<dbReference type="GO" id="GO:0009244">
    <property type="term" value="P:lipopolysaccharide core region biosynthetic process"/>
    <property type="evidence" value="ECO:0007669"/>
    <property type="project" value="UniProtKB-UniPathway"/>
</dbReference>
<dbReference type="Gene3D" id="3.40.50.11720">
    <property type="entry name" value="3-Deoxy-D-manno-octulosonic-acid transferase, N-terminal domain"/>
    <property type="match status" value="1"/>
</dbReference>
<dbReference type="Gene3D" id="3.40.50.2000">
    <property type="entry name" value="Glycogen Phosphorylase B"/>
    <property type="match status" value="1"/>
</dbReference>
<dbReference type="InterPro" id="IPR007507">
    <property type="entry name" value="Glycos_transf_N"/>
</dbReference>
<dbReference type="InterPro" id="IPR038107">
    <property type="entry name" value="Glycos_transf_N_sf"/>
</dbReference>
<dbReference type="InterPro" id="IPR039901">
    <property type="entry name" value="Kdotransferase"/>
</dbReference>
<dbReference type="NCBIfam" id="NF004389">
    <property type="entry name" value="PRK05749.1-5"/>
    <property type="match status" value="1"/>
</dbReference>
<dbReference type="PANTHER" id="PTHR42755:SF1">
    <property type="entry name" value="3-DEOXY-D-MANNO-OCTULOSONIC ACID TRANSFERASE, MITOCHONDRIAL-RELATED"/>
    <property type="match status" value="1"/>
</dbReference>
<dbReference type="PANTHER" id="PTHR42755">
    <property type="entry name" value="3-DEOXY-MANNO-OCTULOSONATE CYTIDYLYLTRANSFERASE"/>
    <property type="match status" value="1"/>
</dbReference>
<dbReference type="Pfam" id="PF04413">
    <property type="entry name" value="Glycos_transf_N"/>
    <property type="match status" value="1"/>
</dbReference>
<dbReference type="SUPFAM" id="SSF53756">
    <property type="entry name" value="UDP-Glycosyltransferase/glycogen phosphorylase"/>
    <property type="match status" value="1"/>
</dbReference>
<comment type="function">
    <text evidence="2">Involved in lipopolysaccharide (LPS) biosynthesis. Catalyzes the transfer of three 3-deoxy-D-manno-octulosonate (Kdo) residues from CMP-Kdo to lipid IV(A), the tetraacyldisaccharide-1,4'-bisphosphate precursor of lipid A. Thus generates the genus-specific LPS epitope of Chlamydia, composed of the trisaccharide alpha-Kdo-(2-&gt;8)-alpha-Kdo-(2-&gt;4)-alpha-Kdo.</text>
</comment>
<comment type="catalytic activity">
    <reaction>
        <text>lipid IVA (E. coli) + CMP-3-deoxy-beta-D-manno-octulosonate = alpha-Kdo-(2-&gt;6)-lipid IVA (E. coli) + CMP + H(+)</text>
        <dbReference type="Rhea" id="RHEA:28066"/>
        <dbReference type="ChEBI" id="CHEBI:15378"/>
        <dbReference type="ChEBI" id="CHEBI:58603"/>
        <dbReference type="ChEBI" id="CHEBI:60364"/>
        <dbReference type="ChEBI" id="CHEBI:60377"/>
        <dbReference type="ChEBI" id="CHEBI:85987"/>
        <dbReference type="EC" id="2.4.99.12"/>
    </reaction>
</comment>
<comment type="catalytic activity">
    <reaction>
        <text>alpha-Kdo-(2-&gt;6)-lipid IVA (E. coli) + CMP-3-deoxy-beta-D-manno-octulosonate = alpha-Kdo-(2-&gt;4)-alpha-Kdo-(2-&gt;6)-lipid IVA (E. coli) + CMP + H(+)</text>
        <dbReference type="Rhea" id="RHEA:28062"/>
        <dbReference type="ChEBI" id="CHEBI:15378"/>
        <dbReference type="ChEBI" id="CHEBI:60364"/>
        <dbReference type="ChEBI" id="CHEBI:60365"/>
        <dbReference type="ChEBI" id="CHEBI:60377"/>
        <dbReference type="ChEBI" id="CHEBI:85987"/>
        <dbReference type="EC" id="2.4.99.13"/>
    </reaction>
</comment>
<comment type="catalytic activity">
    <reaction>
        <text>alpha-Kdo-(2-&gt;4)-alpha-Kdo-(2-&gt;6)-lipid IVA (E. coli) + CMP-3-deoxy-beta-D-manno-octulosonate = alpha-Kdo-(2-&gt;8)-alpha-Kdo-(2-&gt;4)-alpha-Kdo-(2-&gt;6)-lipid IVA (E. coli) + CMP + H(+)</text>
        <dbReference type="Rhea" id="RHEA:28154"/>
        <dbReference type="ChEBI" id="CHEBI:15378"/>
        <dbReference type="ChEBI" id="CHEBI:60365"/>
        <dbReference type="ChEBI" id="CHEBI:60377"/>
        <dbReference type="ChEBI" id="CHEBI:85987"/>
        <dbReference type="ChEBI" id="CHEBI:86234"/>
        <dbReference type="EC" id="2.4.99.14"/>
    </reaction>
</comment>
<comment type="pathway">
    <text>Bacterial outer membrane biogenesis; LPS core biosynthesis.</text>
</comment>
<comment type="subcellular location">
    <subcellularLocation>
        <location evidence="1">Cell inner membrane</location>
        <topology evidence="1">Single-pass membrane protein</topology>
        <orientation evidence="1">Cytoplasmic side</orientation>
    </subcellularLocation>
</comment>
<comment type="similarity">
    <text evidence="4">Belongs to the glycosyltransferase group 1 family. Glycosyltransferase 30 subfamily.</text>
</comment>
<keyword id="KW-0997">Cell inner membrane</keyword>
<keyword id="KW-1003">Cell membrane</keyword>
<keyword id="KW-0448">Lipopolysaccharide biosynthesis</keyword>
<keyword id="KW-0472">Membrane</keyword>
<keyword id="KW-0735">Signal-anchor</keyword>
<keyword id="KW-0808">Transferase</keyword>
<keyword id="KW-0812">Transmembrane</keyword>
<keyword id="KW-1133">Transmembrane helix</keyword>
<reference key="1">
    <citation type="journal article" date="2000" name="Nucleic Acids Res.">
        <title>Genome sequences of Chlamydia trachomatis MoPn and Chlamydia pneumoniae AR39.</title>
        <authorList>
            <person name="Read T.D."/>
            <person name="Brunham R.C."/>
            <person name="Shen C."/>
            <person name="Gill S.R."/>
            <person name="Heidelberg J.F."/>
            <person name="White O."/>
            <person name="Hickey E.K."/>
            <person name="Peterson J.D."/>
            <person name="Utterback T.R."/>
            <person name="Berry K.J."/>
            <person name="Bass S."/>
            <person name="Linher K.D."/>
            <person name="Weidman J.F."/>
            <person name="Khouri H.M."/>
            <person name="Craven B."/>
            <person name="Bowman C."/>
            <person name="Dodson R.J."/>
            <person name="Gwinn M.L."/>
            <person name="Nelson W.C."/>
            <person name="DeBoy R.T."/>
            <person name="Kolonay J.F."/>
            <person name="McClarty G."/>
            <person name="Salzberg S.L."/>
            <person name="Eisen J.A."/>
            <person name="Fraser C.M."/>
        </authorList>
    </citation>
    <scope>NUCLEOTIDE SEQUENCE [LARGE SCALE GENOMIC DNA]</scope>
    <source>
        <strain>MoPn / Nigg</strain>
    </source>
</reference>
<sequence>MRRWLTSRLYDAFLVAAFLAAAPRIFYKVVFHGKYINSWKIRFGVEKPQVKGEGPLVWFHGASVGEVSLLEPLLKKWRQEFPDWRFVVTACSEAGVYTAQRLYAPLGATVFVLPLDLSCIINPVVRSLSPQVVIFSEGDCWLHFLMGAKKLGAKAFLINGKLSENSCKRFAFLKRLGRSYFAPLDLLVLQDKVYKQRFMQIGIPEDKIQISGNLKTFIETETSINNRSLWRKKLKLSPSDRLIVLGSMHPKDVEVWADVAQHFNKFSTKILWVPRHLEKLKEHARLLEKAGISFGLWSKEDSLLQYDSLIVDAMGILKDLYSAADLAFVGGTFDPLVGGHNLLEPLQKEVPLMFGPHIHSQSVLAELLRTKEVGVSVDKENLLEAVENLLEDEKKRQAYIERGKSFLKNAGTSFEHTWEILKSQIACIKI</sequence>
<evidence type="ECO:0000250" key="1"/>
<evidence type="ECO:0000250" key="2">
    <source>
        <dbReference type="UniProtKB" id="Q46222"/>
    </source>
</evidence>
<evidence type="ECO:0000255" key="3"/>
<evidence type="ECO:0000305" key="4"/>
<feature type="chain" id="PRO_0000080282" description="3-deoxy-D-manno-octulosonic acid transferase">
    <location>
        <begin position="1"/>
        <end position="430"/>
    </location>
</feature>
<feature type="transmembrane region" description="Helical; Signal-anchor" evidence="3">
    <location>
        <begin position="12"/>
        <end position="32"/>
    </location>
</feature>
<feature type="active site" description="Proton acceptor" evidence="1">
    <location>
        <position position="66"/>
    </location>
</feature>
<feature type="binding site" evidence="1">
    <location>
        <begin position="274"/>
        <end position="275"/>
    </location>
    <ligand>
        <name>CMP</name>
        <dbReference type="ChEBI" id="CHEBI:60377"/>
    </ligand>
</feature>
<feature type="binding site" evidence="1">
    <location>
        <begin position="314"/>
        <end position="316"/>
    </location>
    <ligand>
        <name>CMP</name>
        <dbReference type="ChEBI" id="CHEBI:60377"/>
    </ligand>
</feature>
<feature type="binding site" evidence="1">
    <location>
        <begin position="341"/>
        <end position="344"/>
    </location>
    <ligand>
        <name>CMP</name>
        <dbReference type="ChEBI" id="CHEBI:60377"/>
    </ligand>
</feature>
<feature type="site" description="Transition state stabilizer" evidence="1">
    <location>
        <position position="137"/>
    </location>
</feature>
<feature type="site" description="Transition state stabilizer" evidence="1">
    <location>
        <position position="215"/>
    </location>
</feature>
<organism>
    <name type="scientific">Chlamydia muridarum (strain MoPn / Nigg)</name>
    <dbReference type="NCBI Taxonomy" id="243161"/>
    <lineage>
        <taxon>Bacteria</taxon>
        <taxon>Pseudomonadati</taxon>
        <taxon>Chlamydiota</taxon>
        <taxon>Chlamydiia</taxon>
        <taxon>Chlamydiales</taxon>
        <taxon>Chlamydiaceae</taxon>
        <taxon>Chlamydia/Chlamydophila group</taxon>
        <taxon>Chlamydia</taxon>
    </lineage>
</organism>
<proteinExistence type="inferred from homology"/>
<protein>
    <recommendedName>
        <fullName>3-deoxy-D-manno-octulosonic acid transferase</fullName>
        <shortName>Kdo transferase</shortName>
        <ecNumber>2.4.99.12</ecNumber>
        <ecNumber>2.4.99.13</ecNumber>
        <ecNumber>2.4.99.14</ecNumber>
    </recommendedName>
    <alternativeName>
        <fullName>Kdo(2)-lipid IV(A) 3-deoxy-D-manno-octulosonic acid transferase</fullName>
    </alternativeName>
    <alternativeName>
        <fullName>Kdo-lipid IV(A) 3-deoxy-D-manno-octulosonic acid transferase</fullName>
    </alternativeName>
    <alternativeName>
        <fullName>Lipid IV(A) 3-deoxy-D-manno-octulosonic acid transferase</fullName>
    </alternativeName>
</protein>
<gene>
    <name type="primary">waaA</name>
    <name type="synonym">kdtA</name>
    <name type="ordered locus">TC_0480</name>
</gene>